<sequence>MGNFKSVGQEPGPPCGLGLGLGLGLCGKQGPASPAPVSASEPTRAPSSPPLPLPAPEHSPPLTRPPEGPKFPRVKNWEVGSIAYDTLSAQAQQDGPCTPRRCLGSLVFPRKLQGRPSQSPLPQEQLLGQARDFINQYYSSIKRSGSQAHELRLQEVEAEVVATGTYQLRESELVFGAKQAWRNAPRCVGRIQWGKLQVFDARDCRSAQEMFTYICNHIKYATNRGNLRSAITVFPQRFPGRGDFRIWNSQLIRYAGYRQQDGSVRGDPANVEITELCVQHGWTPGNGRFDVLPLLLQAPDEPPELFTLPPELVLEVPLEHPTLEWFAALGLRWYALPAVSNMLLEIGGLEFPAVPFSGWYMSSEIGMRNFCDPHRYNILEDVAVCMDLDTRTTSSLWKDKAAVEINVAVLHSYQLAKVTIVDHHAATASFMKHLENEQKARGGCPADWAWIVPPISGSLTPVFHQEMVNYFLSPAFRYQPDPWKGSGTKGTGITRKKTFKEVANAVKISASLMGTVMAKRVKATILYGSETGRAQSYAQQLGRLFRKAFDPRVLCMDEYDVVSLEHETLVLVVTSTFGNGDPPENGESFAAALMEMSGPYNSSPRPEQHKSYKIRFNSVSCSDPLVTSWRRKRKESSNTDSAGALGTLRFCVFGLGSRAYPHFCAFARAVDTRLEELGGERLLQLGQGDELCGQEEAFRGWAQAAFQAACETFCVGEDAKAAAKDIFSPKCSWKRQRYRLSTQAQGLQLLPGLIHVHRRKMFQATILSVENLQSSKSTRATILVRLDTGGQEGLQYQPGDHIGICPPNRPGLVEALLSRVEDPPPPAESVAVEQLEKGSPGGPPPGWVRDPRLPPCTLRQALTFFLDITSPPSPRLLRLLSTLAEEPSEQQELETLSQDPRRYEEWKWFRCPTLLEVLEQFPSIALPAPLLLTQLPLLQPRYYSVSSAPSAHPGEIHLTVAVLAYRTQDGLGPLHYGVCSTWLSQLKTGDQVPCFIRGAPSFRLPPDPSLPCILVGPGTGIAPFRGFWQERLHDIESKGLQPAPMTLVFGCRCSQLDHLYRDEVQDAQQRGVFGRVLTAFSREPNSPKERHLRGAVPWAFDLPGPDTSSP</sequence>
<reference key="1">
    <citation type="journal article" date="2011" name="Nature">
        <title>A high-resolution map of human evolutionary constraint using 29 mammals.</title>
        <authorList>
            <person name="Lindblad-Toh K."/>
            <person name="Garber M."/>
            <person name="Zuk O."/>
            <person name="Lin M.F."/>
            <person name="Parker B.J."/>
            <person name="Washietl S."/>
            <person name="Kheradpour P."/>
            <person name="Ernst J."/>
            <person name="Jordan G."/>
            <person name="Mauceli E."/>
            <person name="Ward L.D."/>
            <person name="Lowe C.B."/>
            <person name="Holloway A.K."/>
            <person name="Clamp M."/>
            <person name="Gnerre S."/>
            <person name="Alfoldi J."/>
            <person name="Beal K."/>
            <person name="Chang J."/>
            <person name="Clawson H."/>
            <person name="Cuff J."/>
            <person name="Di Palma F."/>
            <person name="Fitzgerald S."/>
            <person name="Flicek P."/>
            <person name="Guttman M."/>
            <person name="Hubisz M.J."/>
            <person name="Jaffe D.B."/>
            <person name="Jungreis I."/>
            <person name="Kent W.J."/>
            <person name="Kostka D."/>
            <person name="Lara M."/>
            <person name="Martins A.L."/>
            <person name="Massingham T."/>
            <person name="Moltke I."/>
            <person name="Raney B.J."/>
            <person name="Rasmussen M.D."/>
            <person name="Robinson J."/>
            <person name="Stark A."/>
            <person name="Vilella A.J."/>
            <person name="Wen J."/>
            <person name="Xie X."/>
            <person name="Zody M.C."/>
            <person name="Baldwin J."/>
            <person name="Bloom T."/>
            <person name="Chin C.W."/>
            <person name="Heiman D."/>
            <person name="Nicol R."/>
            <person name="Nusbaum C."/>
            <person name="Young S."/>
            <person name="Wilkinson J."/>
            <person name="Worley K.C."/>
            <person name="Kovar C.L."/>
            <person name="Muzny D.M."/>
            <person name="Gibbs R.A."/>
            <person name="Cree A."/>
            <person name="Dihn H.H."/>
            <person name="Fowler G."/>
            <person name="Jhangiani S."/>
            <person name="Joshi V."/>
            <person name="Lee S."/>
            <person name="Lewis L.R."/>
            <person name="Nazareth L.V."/>
            <person name="Okwuonu G."/>
            <person name="Santibanez J."/>
            <person name="Warren W.C."/>
            <person name="Mardis E.R."/>
            <person name="Weinstock G.M."/>
            <person name="Wilson R.K."/>
            <person name="Delehaunty K."/>
            <person name="Dooling D."/>
            <person name="Fronik C."/>
            <person name="Fulton L."/>
            <person name="Fulton B."/>
            <person name="Graves T."/>
            <person name="Minx P."/>
            <person name="Sodergren E."/>
            <person name="Birney E."/>
            <person name="Margulies E.H."/>
            <person name="Herrero J."/>
            <person name="Green E.D."/>
            <person name="Haussler D."/>
            <person name="Siepel A."/>
            <person name="Goldman N."/>
            <person name="Pollard K.S."/>
            <person name="Pedersen J.S."/>
            <person name="Lander E.S."/>
            <person name="Kellis M."/>
        </authorList>
    </citation>
    <scope>NUCLEOTIDE SEQUENCE [LARGE SCALE GENOMIC DNA]</scope>
    <source>
        <strain>2N</strain>
    </source>
</reference>
<reference key="2">
    <citation type="journal article" date="1998" name="Brain Res. Dev. Brain Res.">
        <title>Effect of chronic hypoxemia on the regulation of nitric-oxide synthase in the fetal sheep brain.</title>
        <authorList>
            <person name="Aguan K."/>
            <person name="Murotsuki J."/>
            <person name="Gagnon R."/>
            <person name="Thompson L.P."/>
            <person name="Weiner C.P."/>
        </authorList>
    </citation>
    <scope>PARTIAL NUCLEOTIDE SEQUENCE [MRNA]</scope>
    <source>
        <tissue>Endothelial cell</tissue>
    </source>
</reference>
<gene>
    <name type="primary">NOS3</name>
    <name type="synonym">ENOS</name>
</gene>
<dbReference type="EC" id="1.14.13.39" evidence="3"/>
<dbReference type="EMBL" id="AAKN02032925">
    <property type="status" value="NOT_ANNOTATED_CDS"/>
    <property type="molecule type" value="Genomic_DNA"/>
</dbReference>
<dbReference type="EMBL" id="U76736">
    <property type="protein sequence ID" value="AAB40703.1"/>
    <property type="status" value="ALT_SEQ"/>
    <property type="molecule type" value="mRNA"/>
</dbReference>
<dbReference type="SMR" id="P97270"/>
<dbReference type="STRING" id="10141.ENSCPOP00000003945"/>
<dbReference type="Ensembl" id="ENSCPOT00000004421.3">
    <property type="protein sequence ID" value="ENSCPOP00000003946.3"/>
    <property type="gene ID" value="ENSCPOG00000004373.4"/>
</dbReference>
<dbReference type="VEuPathDB" id="HostDB:ENSCPOG00000004373"/>
<dbReference type="GeneTree" id="ENSGT00940000161389"/>
<dbReference type="HOGENOM" id="CLU_001570_16_0_1"/>
<dbReference type="InParanoid" id="P97270"/>
<dbReference type="Proteomes" id="UP000005447">
    <property type="component" value="Unassembled WGS sequence"/>
</dbReference>
<dbReference type="Bgee" id="ENSCPOG00000004373">
    <property type="expression patterns" value="Expressed in zone of skin and 12 other cell types or tissues"/>
</dbReference>
<dbReference type="GO" id="GO:0005901">
    <property type="term" value="C:caveola"/>
    <property type="evidence" value="ECO:0007669"/>
    <property type="project" value="UniProtKB-SubCell"/>
</dbReference>
<dbReference type="GO" id="GO:0005856">
    <property type="term" value="C:cytoskeleton"/>
    <property type="evidence" value="ECO:0007669"/>
    <property type="project" value="UniProtKB-SubCell"/>
</dbReference>
<dbReference type="GO" id="GO:0005794">
    <property type="term" value="C:Golgi apparatus"/>
    <property type="evidence" value="ECO:0007669"/>
    <property type="project" value="UniProtKB-SubCell"/>
</dbReference>
<dbReference type="GO" id="GO:0005516">
    <property type="term" value="F:calmodulin binding"/>
    <property type="evidence" value="ECO:0007669"/>
    <property type="project" value="UniProtKB-KW"/>
</dbReference>
<dbReference type="GO" id="GO:0050660">
    <property type="term" value="F:flavin adenine dinucleotide binding"/>
    <property type="evidence" value="ECO:0007669"/>
    <property type="project" value="InterPro"/>
</dbReference>
<dbReference type="GO" id="GO:0010181">
    <property type="term" value="F:FMN binding"/>
    <property type="evidence" value="ECO:0007669"/>
    <property type="project" value="InterPro"/>
</dbReference>
<dbReference type="GO" id="GO:0020037">
    <property type="term" value="F:heme binding"/>
    <property type="evidence" value="ECO:0007669"/>
    <property type="project" value="InterPro"/>
</dbReference>
<dbReference type="GO" id="GO:0046872">
    <property type="term" value="F:metal ion binding"/>
    <property type="evidence" value="ECO:0007669"/>
    <property type="project" value="UniProtKB-KW"/>
</dbReference>
<dbReference type="GO" id="GO:0050661">
    <property type="term" value="F:NADP binding"/>
    <property type="evidence" value="ECO:0007669"/>
    <property type="project" value="InterPro"/>
</dbReference>
<dbReference type="GO" id="GO:0004517">
    <property type="term" value="F:nitric-oxide synthase activity"/>
    <property type="evidence" value="ECO:0007669"/>
    <property type="project" value="UniProtKB-EC"/>
</dbReference>
<dbReference type="GO" id="GO:0006809">
    <property type="term" value="P:nitric oxide biosynthetic process"/>
    <property type="evidence" value="ECO:0007669"/>
    <property type="project" value="InterPro"/>
</dbReference>
<dbReference type="CDD" id="cd00795">
    <property type="entry name" value="NOS_oxygenase_euk"/>
    <property type="match status" value="1"/>
</dbReference>
<dbReference type="FunFam" id="3.90.440.10:FF:000001">
    <property type="entry name" value="Endothelial nitric oxide synthase"/>
    <property type="match status" value="1"/>
</dbReference>
<dbReference type="FunFam" id="1.20.990.10:FF:000005">
    <property type="entry name" value="Nitric oxide synthase"/>
    <property type="match status" value="1"/>
</dbReference>
<dbReference type="FunFam" id="3.40.50.360:FF:000003">
    <property type="entry name" value="Nitric oxide synthase"/>
    <property type="match status" value="1"/>
</dbReference>
<dbReference type="FunFam" id="3.90.1230.10:FF:000001">
    <property type="entry name" value="Nitric oxide synthase, brain"/>
    <property type="match status" value="1"/>
</dbReference>
<dbReference type="Gene3D" id="3.40.50.360">
    <property type="match status" value="1"/>
</dbReference>
<dbReference type="Gene3D" id="1.20.990.10">
    <property type="entry name" value="NADPH-cytochrome p450 Reductase, Chain A, domain 3"/>
    <property type="match status" value="1"/>
</dbReference>
<dbReference type="Gene3D" id="3.90.340.10">
    <property type="entry name" value="Nitric Oxide Synthase, Chain A, domain 1"/>
    <property type="match status" value="1"/>
</dbReference>
<dbReference type="Gene3D" id="3.90.1230.10">
    <property type="entry name" value="Nitric Oxide Synthase, Chain A, domain 3"/>
    <property type="match status" value="1"/>
</dbReference>
<dbReference type="Gene3D" id="3.90.440.10">
    <property type="entry name" value="Nitric Oxide Synthase,Heme Domain,Chain A domain 2"/>
    <property type="match status" value="1"/>
</dbReference>
<dbReference type="Gene3D" id="3.40.50.80">
    <property type="entry name" value="Nucleotide-binding domain of ferredoxin-NADP reductase (FNR) module"/>
    <property type="match status" value="1"/>
</dbReference>
<dbReference type="Gene3D" id="2.40.30.10">
    <property type="entry name" value="Translation factors"/>
    <property type="match status" value="1"/>
</dbReference>
<dbReference type="InterPro" id="IPR003097">
    <property type="entry name" value="CysJ-like_FAD-binding"/>
</dbReference>
<dbReference type="InterPro" id="IPR017927">
    <property type="entry name" value="FAD-bd_FR_type"/>
</dbReference>
<dbReference type="InterPro" id="IPR001094">
    <property type="entry name" value="Flavdoxin-like"/>
</dbReference>
<dbReference type="InterPro" id="IPR008254">
    <property type="entry name" value="Flavodoxin/NO_synth"/>
</dbReference>
<dbReference type="InterPro" id="IPR001709">
    <property type="entry name" value="Flavoprot_Pyr_Nucl_cyt_Rdtase"/>
</dbReference>
<dbReference type="InterPro" id="IPR029039">
    <property type="entry name" value="Flavoprotein-like_sf"/>
</dbReference>
<dbReference type="InterPro" id="IPR039261">
    <property type="entry name" value="FNR_nucleotide-bd"/>
</dbReference>
<dbReference type="InterPro" id="IPR023173">
    <property type="entry name" value="NADPH_Cyt_P450_Rdtase_alpha"/>
</dbReference>
<dbReference type="InterPro" id="IPR050607">
    <property type="entry name" value="NOS"/>
</dbReference>
<dbReference type="InterPro" id="IPR044943">
    <property type="entry name" value="NOS_dom_1"/>
</dbReference>
<dbReference type="InterPro" id="IPR044940">
    <property type="entry name" value="NOS_dom_2"/>
</dbReference>
<dbReference type="InterPro" id="IPR044944">
    <property type="entry name" value="NOS_dom_3"/>
</dbReference>
<dbReference type="InterPro" id="IPR012144">
    <property type="entry name" value="NOS_euk"/>
</dbReference>
<dbReference type="InterPro" id="IPR004030">
    <property type="entry name" value="NOS_N"/>
</dbReference>
<dbReference type="InterPro" id="IPR036119">
    <property type="entry name" value="NOS_N_sf"/>
</dbReference>
<dbReference type="InterPro" id="IPR001433">
    <property type="entry name" value="OxRdtase_FAD/NAD-bd"/>
</dbReference>
<dbReference type="InterPro" id="IPR017938">
    <property type="entry name" value="Riboflavin_synthase-like_b-brl"/>
</dbReference>
<dbReference type="PANTHER" id="PTHR43410:SF1">
    <property type="entry name" value="NITRIC OXIDE SYNTHASE"/>
    <property type="match status" value="1"/>
</dbReference>
<dbReference type="PANTHER" id="PTHR43410">
    <property type="entry name" value="NITRIC OXIDE SYNTHASE OXYGENASE"/>
    <property type="match status" value="1"/>
</dbReference>
<dbReference type="Pfam" id="PF00667">
    <property type="entry name" value="FAD_binding_1"/>
    <property type="match status" value="1"/>
</dbReference>
<dbReference type="Pfam" id="PF00258">
    <property type="entry name" value="Flavodoxin_1"/>
    <property type="match status" value="1"/>
</dbReference>
<dbReference type="Pfam" id="PF00175">
    <property type="entry name" value="NAD_binding_1"/>
    <property type="match status" value="1"/>
</dbReference>
<dbReference type="Pfam" id="PF02898">
    <property type="entry name" value="NO_synthase"/>
    <property type="match status" value="1"/>
</dbReference>
<dbReference type="PIRSF" id="PIRSF000333">
    <property type="entry name" value="NOS"/>
    <property type="match status" value="1"/>
</dbReference>
<dbReference type="PRINTS" id="PR00369">
    <property type="entry name" value="FLAVODOXIN"/>
</dbReference>
<dbReference type="PRINTS" id="PR00371">
    <property type="entry name" value="FPNCR"/>
</dbReference>
<dbReference type="SUPFAM" id="SSF52343">
    <property type="entry name" value="Ferredoxin reductase-like, C-terminal NADP-linked domain"/>
    <property type="match status" value="1"/>
</dbReference>
<dbReference type="SUPFAM" id="SSF52218">
    <property type="entry name" value="Flavoproteins"/>
    <property type="match status" value="1"/>
</dbReference>
<dbReference type="SUPFAM" id="SSF56512">
    <property type="entry name" value="Nitric oxide (NO) synthase oxygenase domain"/>
    <property type="match status" value="1"/>
</dbReference>
<dbReference type="SUPFAM" id="SSF63380">
    <property type="entry name" value="Riboflavin synthase domain-like"/>
    <property type="match status" value="1"/>
</dbReference>
<proteinExistence type="evidence at transcript level"/>
<feature type="initiator methionine" description="Removed" evidence="2">
    <location>
        <position position="1"/>
    </location>
</feature>
<feature type="chain" id="PRO_0000170942" description="Nitric oxide synthase 3">
    <location>
        <begin position="2"/>
        <end position="1110"/>
    </location>
</feature>
<feature type="region of interest" description="Disordered" evidence="7">
    <location>
        <begin position="1"/>
        <end position="74"/>
    </location>
</feature>
<feature type="region of interest" description="Interaction with NOSIP" evidence="3">
    <location>
        <begin position="101"/>
        <end position="489"/>
    </location>
</feature>
<feature type="region of interest" description="Disordered" evidence="7">
    <location>
        <begin position="821"/>
        <end position="848"/>
    </location>
</feature>
<feature type="compositionally biased region" description="Gly residues" evidence="7">
    <location>
        <begin position="15"/>
        <end position="27"/>
    </location>
</feature>
<feature type="compositionally biased region" description="Low complexity" evidence="7">
    <location>
        <begin position="31"/>
        <end position="40"/>
    </location>
</feature>
<feature type="compositionally biased region" description="Pro residues" evidence="7">
    <location>
        <begin position="47"/>
        <end position="69"/>
    </location>
</feature>
<feature type="binding site" evidence="3">
    <location>
        <position position="97"/>
    </location>
    <ligand>
        <name>Zn(2+)</name>
        <dbReference type="ChEBI" id="CHEBI:29105"/>
        <note>ligand shared between homodimeric partners</note>
    </ligand>
</feature>
<feature type="binding site" evidence="3">
    <location>
        <position position="102"/>
    </location>
    <ligand>
        <name>Zn(2+)</name>
        <dbReference type="ChEBI" id="CHEBI:29105"/>
        <note>ligand shared between homodimeric partners</note>
    </ligand>
</feature>
<feature type="binding site" evidence="3">
    <location>
        <position position="105"/>
    </location>
    <ligand>
        <name>(6R)-L-erythro-5,6,7,8-tetrahydrobiopterin</name>
        <dbReference type="ChEBI" id="CHEBI:59560"/>
    </ligand>
</feature>
<feature type="binding site" description="axial binding residue" evidence="3">
    <location>
        <position position="187"/>
    </location>
    <ligand>
        <name>heme b</name>
        <dbReference type="ChEBI" id="CHEBI:60344"/>
    </ligand>
    <ligandPart>
        <name>Fe</name>
        <dbReference type="ChEBI" id="CHEBI:18248"/>
    </ligandPart>
</feature>
<feature type="binding site" evidence="3">
    <location>
        <position position="250"/>
    </location>
    <ligand>
        <name>L-arginine</name>
        <dbReference type="ChEBI" id="CHEBI:32682"/>
    </ligand>
</feature>
<feature type="binding site" evidence="3">
    <location>
        <position position="359"/>
    </location>
    <ligand>
        <name>L-arginine</name>
        <dbReference type="ChEBI" id="CHEBI:32682"/>
    </ligand>
</feature>
<feature type="binding site" evidence="3">
    <location>
        <position position="360"/>
    </location>
    <ligand>
        <name>L-arginine</name>
        <dbReference type="ChEBI" id="CHEBI:32682"/>
    </ligand>
</feature>
<feature type="binding site" evidence="3">
    <location>
        <position position="364"/>
    </location>
    <ligand>
        <name>L-arginine</name>
        <dbReference type="ChEBI" id="CHEBI:32682"/>
    </ligand>
</feature>
<feature type="binding site" evidence="3">
    <location>
        <position position="368"/>
    </location>
    <ligand>
        <name>(6R)-L-erythro-5,6,7,8-tetrahydrobiopterin</name>
        <dbReference type="ChEBI" id="CHEBI:59560"/>
    </ligand>
</feature>
<feature type="binding site" evidence="3">
    <location>
        <position position="369"/>
    </location>
    <ligand>
        <name>L-arginine</name>
        <dbReference type="ChEBI" id="CHEBI:32682"/>
    </ligand>
</feature>
<feature type="binding site" evidence="3">
    <location>
        <position position="449"/>
    </location>
    <ligand>
        <name>(6R)-L-erythro-5,6,7,8-tetrahydrobiopterin</name>
        <dbReference type="ChEBI" id="CHEBI:59560"/>
    </ligand>
</feature>
<feature type="binding site" evidence="3">
    <location>
        <position position="450"/>
    </location>
    <ligand>
        <name>(6R)-L-erythro-5,6,7,8-tetrahydrobiopterin</name>
        <dbReference type="ChEBI" id="CHEBI:59560"/>
    </ligand>
</feature>
<feature type="binding site" evidence="3">
    <location>
        <position position="463"/>
    </location>
    <ligand>
        <name>(6R)-L-erythro-5,6,7,8-tetrahydrobiopterin</name>
        <dbReference type="ChEBI" id="CHEBI:59560"/>
    </ligand>
</feature>
<feature type="binding site" evidence="3">
    <location>
        <position position="478"/>
    </location>
    <ligand>
        <name>heme b</name>
        <dbReference type="ChEBI" id="CHEBI:60344"/>
    </ligand>
</feature>
<feature type="binding site" evidence="5">
    <location>
        <position position="529"/>
    </location>
    <ligand>
        <name>FMN</name>
        <dbReference type="ChEBI" id="CHEBI:58210"/>
    </ligand>
</feature>
<feature type="binding site" evidence="5">
    <location>
        <position position="530"/>
    </location>
    <ligand>
        <name>FMN</name>
        <dbReference type="ChEBI" id="CHEBI:58210"/>
    </ligand>
</feature>
<feature type="binding site" evidence="5">
    <location>
        <position position="531"/>
    </location>
    <ligand>
        <name>FMN</name>
        <dbReference type="ChEBI" id="CHEBI:58210"/>
    </ligand>
</feature>
<feature type="binding site" evidence="5">
    <location>
        <position position="533"/>
    </location>
    <ligand>
        <name>FMN</name>
        <dbReference type="ChEBI" id="CHEBI:58210"/>
    </ligand>
</feature>
<feature type="binding site" evidence="5">
    <location>
        <position position="575"/>
    </location>
    <ligand>
        <name>FMN</name>
        <dbReference type="ChEBI" id="CHEBI:58210"/>
    </ligand>
</feature>
<feature type="binding site" evidence="5">
    <location>
        <position position="576"/>
    </location>
    <ligand>
        <name>FMN</name>
        <dbReference type="ChEBI" id="CHEBI:58210"/>
    </ligand>
</feature>
<feature type="binding site" evidence="5">
    <location>
        <position position="657"/>
    </location>
    <ligand>
        <name>FMN</name>
        <dbReference type="ChEBI" id="CHEBI:58210"/>
    </ligand>
</feature>
<feature type="binding site" evidence="5">
    <location>
        <position position="664"/>
    </location>
    <ligand>
        <name>FMN</name>
        <dbReference type="ChEBI" id="CHEBI:58210"/>
    </ligand>
</feature>
<feature type="binding site" evidence="5">
    <location>
        <position position="690"/>
    </location>
    <ligand>
        <name>FMN</name>
        <dbReference type="ChEBI" id="CHEBI:58210"/>
    </ligand>
</feature>
<feature type="binding site" evidence="5">
    <location>
        <position position="694"/>
    </location>
    <ligand>
        <name>FMN</name>
        <dbReference type="ChEBI" id="CHEBI:58210"/>
    </ligand>
</feature>
<feature type="binding site" evidence="4">
    <location>
        <position position="779"/>
    </location>
    <ligand>
        <name>NADP(+)</name>
        <dbReference type="ChEBI" id="CHEBI:58349"/>
    </ligand>
</feature>
<feature type="binding site" evidence="4">
    <location>
        <position position="801"/>
    </location>
    <ligand>
        <name>FAD</name>
        <dbReference type="ChEBI" id="CHEBI:57692"/>
    </ligand>
</feature>
<feature type="binding site" evidence="4">
    <location>
        <position position="941"/>
    </location>
    <ligand>
        <name>FAD</name>
        <dbReference type="ChEBI" id="CHEBI:57692"/>
    </ligand>
</feature>
<feature type="binding site" evidence="4">
    <location>
        <position position="943"/>
    </location>
    <ligand>
        <name>FAD</name>
        <dbReference type="ChEBI" id="CHEBI:57692"/>
    </ligand>
</feature>
<feature type="binding site" evidence="4">
    <location>
        <position position="944"/>
    </location>
    <ligand>
        <name>FAD</name>
        <dbReference type="ChEBI" id="CHEBI:57692"/>
    </ligand>
</feature>
<feature type="binding site" evidence="4">
    <location>
        <position position="959"/>
    </location>
    <ligand>
        <name>FAD</name>
        <dbReference type="ChEBI" id="CHEBI:57692"/>
    </ligand>
</feature>
<feature type="binding site" evidence="4">
    <location>
        <position position="961"/>
    </location>
    <ligand>
        <name>FAD</name>
        <dbReference type="ChEBI" id="CHEBI:57692"/>
    </ligand>
</feature>
<feature type="binding site" evidence="4">
    <location>
        <position position="965"/>
    </location>
    <ligand>
        <name>FAD</name>
        <dbReference type="ChEBI" id="CHEBI:57692"/>
    </ligand>
</feature>
<feature type="binding site" evidence="4">
    <location>
        <position position="978"/>
    </location>
    <ligand>
        <name>FAD</name>
        <dbReference type="ChEBI" id="CHEBI:57692"/>
    </ligand>
</feature>
<feature type="binding site" evidence="4">
    <location>
        <position position="979"/>
    </location>
    <ligand>
        <name>FAD</name>
        <dbReference type="ChEBI" id="CHEBI:57692"/>
    </ligand>
</feature>
<feature type="binding site" evidence="4">
    <location>
        <position position="980"/>
    </location>
    <ligand>
        <name>FAD</name>
        <dbReference type="ChEBI" id="CHEBI:57692"/>
    </ligand>
</feature>
<feature type="binding site" evidence="4">
    <location>
        <position position="1019"/>
    </location>
    <ligand>
        <name>NADP(+)</name>
        <dbReference type="ChEBI" id="CHEBI:58349"/>
    </ligand>
</feature>
<feature type="binding site" evidence="4">
    <location>
        <position position="1052"/>
    </location>
    <ligand>
        <name>NADP(+)</name>
        <dbReference type="ChEBI" id="CHEBI:58349"/>
    </ligand>
</feature>
<feature type="binding site" evidence="4">
    <location>
        <position position="1081"/>
    </location>
    <ligand>
        <name>NADP(+)</name>
        <dbReference type="ChEBI" id="CHEBI:58349"/>
    </ligand>
</feature>
<feature type="binding site" evidence="4">
    <location>
        <position position="1082"/>
    </location>
    <ligand>
        <name>NADP(+)</name>
        <dbReference type="ChEBI" id="CHEBI:58349"/>
    </ligand>
</feature>
<feature type="binding site" evidence="4">
    <location>
        <position position="1088"/>
    </location>
    <ligand>
        <name>NADP(+)</name>
        <dbReference type="ChEBI" id="CHEBI:58349"/>
    </ligand>
</feature>
<feature type="modified residue" description="Phosphoserine" evidence="3">
    <location>
        <position position="117"/>
    </location>
</feature>
<feature type="modified residue" description="Phosphothreonine" evidence="3">
    <location>
        <position position="498"/>
    </location>
</feature>
<feature type="modified residue" description="Phosphoserine" evidence="6">
    <location>
        <position position="618"/>
    </location>
</feature>
<feature type="modified residue" description="Phosphoserine" evidence="3">
    <location>
        <position position="636"/>
    </location>
</feature>
<feature type="modified residue" description="Phosphoserine" evidence="3">
    <location>
        <position position="641"/>
    </location>
</feature>
<feature type="modified residue" description="Phosphoserine" evidence="3">
    <location>
        <position position="839"/>
    </location>
</feature>
<organism>
    <name type="scientific">Cavia porcellus</name>
    <name type="common">Guinea pig</name>
    <dbReference type="NCBI Taxonomy" id="10141"/>
    <lineage>
        <taxon>Eukaryota</taxon>
        <taxon>Metazoa</taxon>
        <taxon>Chordata</taxon>
        <taxon>Craniata</taxon>
        <taxon>Vertebrata</taxon>
        <taxon>Euteleostomi</taxon>
        <taxon>Mammalia</taxon>
        <taxon>Eutheria</taxon>
        <taxon>Euarchontoglires</taxon>
        <taxon>Glires</taxon>
        <taxon>Rodentia</taxon>
        <taxon>Hystricomorpha</taxon>
        <taxon>Caviidae</taxon>
        <taxon>Cavia</taxon>
    </lineage>
</organism>
<keyword id="KW-0106">Calcium</keyword>
<keyword id="KW-0112">Calmodulin-binding</keyword>
<keyword id="KW-1003">Cell membrane</keyword>
<keyword id="KW-0963">Cytoplasm</keyword>
<keyword id="KW-0206">Cytoskeleton</keyword>
<keyword id="KW-0274">FAD</keyword>
<keyword id="KW-0285">Flavoprotein</keyword>
<keyword id="KW-0288">FMN</keyword>
<keyword id="KW-0333">Golgi apparatus</keyword>
<keyword id="KW-0349">Heme</keyword>
<keyword id="KW-0408">Iron</keyword>
<keyword id="KW-0472">Membrane</keyword>
<keyword id="KW-0479">Metal-binding</keyword>
<keyword id="KW-0521">NADP</keyword>
<keyword id="KW-0560">Oxidoreductase</keyword>
<keyword id="KW-0597">Phosphoprotein</keyword>
<keyword id="KW-1185">Reference proteome</keyword>
<keyword id="KW-0862">Zinc</keyword>
<comment type="function">
    <text evidence="3">Produces nitric oxide (NO) which is implicated in vascular smooth muscle relaxation through a cGMP-mediated signal transduction pathway. NO mediates vascular endothelial growth factor (VEGF)-induced angiogenesis in coronary vessels and promotes blood clotting through the activation of platelets (By similarity).</text>
</comment>
<comment type="catalytic activity">
    <reaction evidence="3">
        <text>2 L-arginine + 3 NADPH + 4 O2 + H(+) = 2 L-citrulline + 2 nitric oxide + 3 NADP(+) + 4 H2O</text>
        <dbReference type="Rhea" id="RHEA:19897"/>
        <dbReference type="ChEBI" id="CHEBI:15377"/>
        <dbReference type="ChEBI" id="CHEBI:15378"/>
        <dbReference type="ChEBI" id="CHEBI:15379"/>
        <dbReference type="ChEBI" id="CHEBI:16480"/>
        <dbReference type="ChEBI" id="CHEBI:32682"/>
        <dbReference type="ChEBI" id="CHEBI:57743"/>
        <dbReference type="ChEBI" id="CHEBI:57783"/>
        <dbReference type="ChEBI" id="CHEBI:58349"/>
        <dbReference type="EC" id="1.14.13.39"/>
    </reaction>
    <physiologicalReaction direction="left-to-right" evidence="3">
        <dbReference type="Rhea" id="RHEA:19898"/>
    </physiologicalReaction>
</comment>
<comment type="cofactor">
    <cofactor evidence="3">
        <name>heme b</name>
        <dbReference type="ChEBI" id="CHEBI:60344"/>
    </cofactor>
</comment>
<comment type="cofactor">
    <cofactor evidence="4">
        <name>FAD</name>
        <dbReference type="ChEBI" id="CHEBI:57692"/>
    </cofactor>
    <text evidence="4">Binds 1 FAD.</text>
</comment>
<comment type="cofactor">
    <cofactor evidence="5">
        <name>FMN</name>
        <dbReference type="ChEBI" id="CHEBI:58210"/>
    </cofactor>
    <text evidence="5">Binds 1 FMN.</text>
</comment>
<comment type="cofactor">
    <cofactor evidence="5">
        <name>(6R)-L-erythro-5,6,7,8-tetrahydrobiopterin</name>
        <dbReference type="ChEBI" id="CHEBI:59560"/>
    </cofactor>
    <text evidence="5">Tetrahydrobiopterin (BH4). May stabilize the dimeric form of the enzyme.</text>
</comment>
<comment type="activity regulation">
    <text evidence="1">Stimulated by calcium/calmodulin. Inhibited by NOSIP and NOSTRIN (By similarity).</text>
</comment>
<comment type="subunit">
    <text evidence="3 6">Homodimer. Interacts with NOSIP and NOSTRIN (By similarity). Interacts with HSP90AB1 (By similarity). Forms a complex with ASL, ASS1 and SLC7A1; the complex regulates cell-autonomous L-arginine synthesis and citrulline recycling while channeling extracellular L-arginine to nitric oxide synthesis pathway (By similarity).</text>
</comment>
<comment type="subcellular location">
    <subcellularLocation>
        <location evidence="1">Membrane</location>
        <location evidence="1">Caveola</location>
    </subcellularLocation>
    <subcellularLocation>
        <location evidence="1">Cytoplasm</location>
        <location evidence="1">Cytoskeleton</location>
    </subcellularLocation>
    <subcellularLocation>
        <location evidence="1">Golgi apparatus</location>
    </subcellularLocation>
    <subcellularLocation>
        <location evidence="1">Cell membrane</location>
    </subcellularLocation>
    <text evidence="1">Specifically associates with actin cytoskeleton in the G2 phase of the cell cycle, which is favored by interaction with NOSIP and results in a reduced enzymatic activity.</text>
</comment>
<comment type="induction">
    <text>Repressed by hypoxemia in fetal brain.</text>
</comment>
<comment type="similarity">
    <text evidence="8">Belongs to the NOS family.</text>
</comment>
<comment type="sequence caution" evidence="8">
    <conflict type="miscellaneous discrepancy">
        <sequence resource="EMBL-CDS" id="AAB40703"/>
    </conflict>
</comment>
<evidence type="ECO:0000250" key="1"/>
<evidence type="ECO:0000250" key="2">
    <source>
        <dbReference type="UniProtKB" id="P29473"/>
    </source>
</evidence>
<evidence type="ECO:0000250" key="3">
    <source>
        <dbReference type="UniProtKB" id="P29474"/>
    </source>
</evidence>
<evidence type="ECO:0000250" key="4">
    <source>
        <dbReference type="UniProtKB" id="P29476"/>
    </source>
</evidence>
<evidence type="ECO:0000250" key="5">
    <source>
        <dbReference type="UniProtKB" id="P35228"/>
    </source>
</evidence>
<evidence type="ECO:0000250" key="6">
    <source>
        <dbReference type="UniProtKB" id="P70313"/>
    </source>
</evidence>
<evidence type="ECO:0000256" key="7">
    <source>
        <dbReference type="SAM" id="MobiDB-lite"/>
    </source>
</evidence>
<evidence type="ECO:0000305" key="8"/>
<name>NOS3_CAVPO</name>
<accession>P97270</accession>
<accession>H0V303</accession>
<protein>
    <recommendedName>
        <fullName evidence="8">Nitric oxide synthase 3</fullName>
        <ecNumber evidence="3">1.14.13.39</ecNumber>
    </recommendedName>
    <alternativeName>
        <fullName>Constitutive NOS</fullName>
        <shortName>cNOS</shortName>
    </alternativeName>
    <alternativeName>
        <fullName>EC-NOS</fullName>
    </alternativeName>
    <alternativeName>
        <fullName>NOS type III</fullName>
        <shortName>NOSIII</shortName>
    </alternativeName>
    <alternativeName>
        <fullName evidence="8">Nitric oxide synthase, endothelial</fullName>
        <shortName evidence="8">Endothelial NOS</shortName>
        <shortName evidence="8">eNOS</shortName>
    </alternativeName>
</protein>